<sequence>MLSKELLAALNEQMNQEYFAAHAYMAMAAYCDKESYDGFANFYIEQAKEERFHGKKIYDYINDRGEHAILDTIKAPKVEFSSILETFKDSLAQERDVTQRFYNLSELARNDKDYATISFLNWFLDEQVEEESTFETHIDYLTRIGDDCNTLYLYEKELAARSFNEQ</sequence>
<evidence type="ECO:0000250" key="1"/>
<evidence type="ECO:0000255" key="2">
    <source>
        <dbReference type="PROSITE-ProRule" id="PRU00085"/>
    </source>
</evidence>
<evidence type="ECO:0000305" key="3"/>
<dbReference type="EC" id="1.16.3.2"/>
<dbReference type="EMBL" id="CP000029">
    <property type="protein sequence ID" value="AAW54803.1"/>
    <property type="molecule type" value="Genomic_DNA"/>
</dbReference>
<dbReference type="RefSeq" id="WP_010959207.1">
    <property type="nucleotide sequence ID" value="NC_002976.3"/>
</dbReference>
<dbReference type="SMR" id="Q5HN41"/>
<dbReference type="STRING" id="176279.SERP1431"/>
<dbReference type="KEGG" id="ser:SERP1431"/>
<dbReference type="eggNOG" id="COG1528">
    <property type="taxonomic scope" value="Bacteria"/>
</dbReference>
<dbReference type="HOGENOM" id="CLU_065681_1_2_9"/>
<dbReference type="Proteomes" id="UP000000531">
    <property type="component" value="Chromosome"/>
</dbReference>
<dbReference type="GO" id="GO:0005829">
    <property type="term" value="C:cytosol"/>
    <property type="evidence" value="ECO:0007669"/>
    <property type="project" value="TreeGrafter"/>
</dbReference>
<dbReference type="GO" id="GO:0008199">
    <property type="term" value="F:ferric iron binding"/>
    <property type="evidence" value="ECO:0007669"/>
    <property type="project" value="InterPro"/>
</dbReference>
<dbReference type="GO" id="GO:0008198">
    <property type="term" value="F:ferrous iron binding"/>
    <property type="evidence" value="ECO:0007669"/>
    <property type="project" value="TreeGrafter"/>
</dbReference>
<dbReference type="GO" id="GO:0004322">
    <property type="term" value="F:ferroxidase activity"/>
    <property type="evidence" value="ECO:0007669"/>
    <property type="project" value="TreeGrafter"/>
</dbReference>
<dbReference type="GO" id="GO:0006879">
    <property type="term" value="P:intracellular iron ion homeostasis"/>
    <property type="evidence" value="ECO:0007669"/>
    <property type="project" value="UniProtKB-KW"/>
</dbReference>
<dbReference type="GO" id="GO:0006826">
    <property type="term" value="P:iron ion transport"/>
    <property type="evidence" value="ECO:0007669"/>
    <property type="project" value="InterPro"/>
</dbReference>
<dbReference type="CDD" id="cd01055">
    <property type="entry name" value="Nonheme_Ferritin"/>
    <property type="match status" value="1"/>
</dbReference>
<dbReference type="FunFam" id="1.20.1260.10:FF:000001">
    <property type="entry name" value="Non-heme ferritin"/>
    <property type="match status" value="1"/>
</dbReference>
<dbReference type="Gene3D" id="1.20.1260.10">
    <property type="match status" value="1"/>
</dbReference>
<dbReference type="InterPro" id="IPR001519">
    <property type="entry name" value="Ferritin"/>
</dbReference>
<dbReference type="InterPro" id="IPR012347">
    <property type="entry name" value="Ferritin-like"/>
</dbReference>
<dbReference type="InterPro" id="IPR009040">
    <property type="entry name" value="Ferritin-like_diiron"/>
</dbReference>
<dbReference type="InterPro" id="IPR009078">
    <property type="entry name" value="Ferritin-like_SF"/>
</dbReference>
<dbReference type="InterPro" id="IPR008331">
    <property type="entry name" value="Ferritin_DPS_dom"/>
</dbReference>
<dbReference type="InterPro" id="IPR041719">
    <property type="entry name" value="Ferritin_prok"/>
</dbReference>
<dbReference type="PANTHER" id="PTHR11431:SF127">
    <property type="entry name" value="BACTERIAL NON-HEME FERRITIN"/>
    <property type="match status" value="1"/>
</dbReference>
<dbReference type="PANTHER" id="PTHR11431">
    <property type="entry name" value="FERRITIN"/>
    <property type="match status" value="1"/>
</dbReference>
<dbReference type="Pfam" id="PF00210">
    <property type="entry name" value="Ferritin"/>
    <property type="match status" value="1"/>
</dbReference>
<dbReference type="SUPFAM" id="SSF47240">
    <property type="entry name" value="Ferritin-like"/>
    <property type="match status" value="1"/>
</dbReference>
<dbReference type="PROSITE" id="PS50905">
    <property type="entry name" value="FERRITIN_LIKE"/>
    <property type="match status" value="1"/>
</dbReference>
<gene>
    <name type="primary">ftnA</name>
    <name type="ordered locus">SERP1431</name>
</gene>
<protein>
    <recommendedName>
        <fullName>Bacterial non-heme ferritin</fullName>
        <ecNumber>1.16.3.2</ecNumber>
    </recommendedName>
</protein>
<organism>
    <name type="scientific">Staphylococcus epidermidis (strain ATCC 35984 / DSM 28319 / BCRC 17069 / CCUG 31568 / BM 3577 / RP62A)</name>
    <dbReference type="NCBI Taxonomy" id="176279"/>
    <lineage>
        <taxon>Bacteria</taxon>
        <taxon>Bacillati</taxon>
        <taxon>Bacillota</taxon>
        <taxon>Bacilli</taxon>
        <taxon>Bacillales</taxon>
        <taxon>Staphylococcaceae</taxon>
        <taxon>Staphylococcus</taxon>
    </lineage>
</organism>
<name>FTN_STAEQ</name>
<comment type="function">
    <text evidence="1">Iron-storage protein.</text>
</comment>
<comment type="catalytic activity">
    <reaction>
        <text>4 Fe(2+) + O2 + 6 H2O = 4 iron(III) oxide-hydroxide + 12 H(+)</text>
        <dbReference type="Rhea" id="RHEA:11972"/>
        <dbReference type="ChEBI" id="CHEBI:15377"/>
        <dbReference type="ChEBI" id="CHEBI:15378"/>
        <dbReference type="ChEBI" id="CHEBI:15379"/>
        <dbReference type="ChEBI" id="CHEBI:29033"/>
        <dbReference type="ChEBI" id="CHEBI:78619"/>
        <dbReference type="EC" id="1.16.3.2"/>
    </reaction>
</comment>
<comment type="subcellular location">
    <subcellularLocation>
        <location evidence="1">Cytoplasm</location>
    </subcellularLocation>
</comment>
<comment type="similarity">
    <text evidence="3">Belongs to the ferritin family. Prokaryotic subfamily.</text>
</comment>
<feature type="initiator methionine" description="Removed" evidence="1">
    <location>
        <position position="1"/>
    </location>
</feature>
<feature type="chain" id="PRO_0000298972" description="Bacterial non-heme ferritin">
    <location>
        <begin position="2"/>
        <end position="166"/>
    </location>
</feature>
<feature type="domain" description="Ferritin-like diiron" evidence="2">
    <location>
        <begin position="2"/>
        <end position="145"/>
    </location>
</feature>
<feature type="binding site" evidence="2">
    <location>
        <position position="17"/>
    </location>
    <ligand>
        <name>Fe cation</name>
        <dbReference type="ChEBI" id="CHEBI:24875"/>
        <label>1</label>
    </ligand>
</feature>
<feature type="binding site" evidence="2">
    <location>
        <position position="50"/>
    </location>
    <ligand>
        <name>Fe cation</name>
        <dbReference type="ChEBI" id="CHEBI:24875"/>
        <label>1</label>
    </ligand>
</feature>
<feature type="binding site" evidence="2">
    <location>
        <position position="50"/>
    </location>
    <ligand>
        <name>Fe cation</name>
        <dbReference type="ChEBI" id="CHEBI:24875"/>
        <label>2</label>
    </ligand>
</feature>
<feature type="binding site" evidence="2">
    <location>
        <position position="53"/>
    </location>
    <ligand>
        <name>Fe cation</name>
        <dbReference type="ChEBI" id="CHEBI:24875"/>
        <label>1</label>
    </ligand>
</feature>
<feature type="binding site" evidence="2">
    <location>
        <position position="94"/>
    </location>
    <ligand>
        <name>Fe cation</name>
        <dbReference type="ChEBI" id="CHEBI:24875"/>
        <label>2</label>
    </ligand>
</feature>
<feature type="binding site" evidence="2">
    <location>
        <position position="127"/>
    </location>
    <ligand>
        <name>Fe cation</name>
        <dbReference type="ChEBI" id="CHEBI:24875"/>
        <label>2</label>
    </ligand>
</feature>
<reference key="1">
    <citation type="journal article" date="2005" name="J. Bacteriol.">
        <title>Insights on evolution of virulence and resistance from the complete genome analysis of an early methicillin-resistant Staphylococcus aureus strain and a biofilm-producing methicillin-resistant Staphylococcus epidermidis strain.</title>
        <authorList>
            <person name="Gill S.R."/>
            <person name="Fouts D.E."/>
            <person name="Archer G.L."/>
            <person name="Mongodin E.F."/>
            <person name="DeBoy R.T."/>
            <person name="Ravel J."/>
            <person name="Paulsen I.T."/>
            <person name="Kolonay J.F."/>
            <person name="Brinkac L.M."/>
            <person name="Beanan M.J."/>
            <person name="Dodson R.J."/>
            <person name="Daugherty S.C."/>
            <person name="Madupu R."/>
            <person name="Angiuoli S.V."/>
            <person name="Durkin A.S."/>
            <person name="Haft D.H."/>
            <person name="Vamathevan J.J."/>
            <person name="Khouri H."/>
            <person name="Utterback T.R."/>
            <person name="Lee C."/>
            <person name="Dimitrov G."/>
            <person name="Jiang L."/>
            <person name="Qin H."/>
            <person name="Weidman J."/>
            <person name="Tran K."/>
            <person name="Kang K.H."/>
            <person name="Hance I.R."/>
            <person name="Nelson K.E."/>
            <person name="Fraser C.M."/>
        </authorList>
    </citation>
    <scope>NUCLEOTIDE SEQUENCE [LARGE SCALE GENOMIC DNA]</scope>
    <source>
        <strain>ATCC 35984 / DSM 28319 / BCRC 17069 / CCUG 31568 / BM 3577 / RP62A</strain>
    </source>
</reference>
<keyword id="KW-0963">Cytoplasm</keyword>
<keyword id="KW-0408">Iron</keyword>
<keyword id="KW-0409">Iron storage</keyword>
<keyword id="KW-0479">Metal-binding</keyword>
<keyword id="KW-0560">Oxidoreductase</keyword>
<keyword id="KW-1185">Reference proteome</keyword>
<accession>Q5HN41</accession>
<proteinExistence type="inferred from homology"/>